<dbReference type="EMBL" id="AJ242791">
    <property type="protein sequence ID" value="CAB52130.1"/>
    <property type="molecule type" value="mRNA"/>
</dbReference>
<dbReference type="SMR" id="Q9UW02"/>
<dbReference type="Allergome" id="226">
    <property type="allergen name" value="Cop c 2"/>
</dbReference>
<dbReference type="Allergome" id="3210">
    <property type="allergen name" value="Cop c 2.0101"/>
</dbReference>
<dbReference type="GO" id="GO:0015035">
    <property type="term" value="F:protein-disulfide reductase activity"/>
    <property type="evidence" value="ECO:0007669"/>
    <property type="project" value="InterPro"/>
</dbReference>
<dbReference type="CDD" id="cd02947">
    <property type="entry name" value="TRX_family"/>
    <property type="match status" value="1"/>
</dbReference>
<dbReference type="FunFam" id="3.40.30.10:FF:000245">
    <property type="entry name" value="Thioredoxin"/>
    <property type="match status" value="1"/>
</dbReference>
<dbReference type="Gene3D" id="3.40.30.10">
    <property type="entry name" value="Glutaredoxin"/>
    <property type="match status" value="1"/>
</dbReference>
<dbReference type="InterPro" id="IPR005746">
    <property type="entry name" value="Thioredoxin"/>
</dbReference>
<dbReference type="InterPro" id="IPR036249">
    <property type="entry name" value="Thioredoxin-like_sf"/>
</dbReference>
<dbReference type="InterPro" id="IPR017937">
    <property type="entry name" value="Thioredoxin_CS"/>
</dbReference>
<dbReference type="InterPro" id="IPR013766">
    <property type="entry name" value="Thioredoxin_domain"/>
</dbReference>
<dbReference type="NCBIfam" id="TIGR01068">
    <property type="entry name" value="thioredoxin"/>
    <property type="match status" value="1"/>
</dbReference>
<dbReference type="PANTHER" id="PTHR46115">
    <property type="entry name" value="THIOREDOXIN-LIKE PROTEIN 1"/>
    <property type="match status" value="1"/>
</dbReference>
<dbReference type="Pfam" id="PF00085">
    <property type="entry name" value="Thioredoxin"/>
    <property type="match status" value="1"/>
</dbReference>
<dbReference type="PIRSF" id="PIRSF000077">
    <property type="entry name" value="Thioredoxin"/>
    <property type="match status" value="1"/>
</dbReference>
<dbReference type="PRINTS" id="PR00421">
    <property type="entry name" value="THIOREDOXIN"/>
</dbReference>
<dbReference type="SUPFAM" id="SSF52833">
    <property type="entry name" value="Thioredoxin-like"/>
    <property type="match status" value="1"/>
</dbReference>
<dbReference type="PROSITE" id="PS00194">
    <property type="entry name" value="THIOREDOXIN_1"/>
    <property type="match status" value="1"/>
</dbReference>
<dbReference type="PROSITE" id="PS51352">
    <property type="entry name" value="THIOREDOXIN_2"/>
    <property type="match status" value="1"/>
</dbReference>
<organism>
    <name type="scientific">Coprinus comatus</name>
    <name type="common">Shaggy mane</name>
    <dbReference type="NCBI Taxonomy" id="56187"/>
    <lineage>
        <taxon>Eukaryota</taxon>
        <taxon>Fungi</taxon>
        <taxon>Dikarya</taxon>
        <taxon>Basidiomycota</taxon>
        <taxon>Agaricomycotina</taxon>
        <taxon>Agaricomycetes</taxon>
        <taxon>Agaricomycetidae</taxon>
        <taxon>Agaricales</taxon>
        <taxon>Agaricineae</taxon>
        <taxon>Agaricaceae</taxon>
        <taxon>Coprinus</taxon>
    </lineage>
</organism>
<evidence type="ECO:0000250" key="1"/>
<evidence type="ECO:0000255" key="2">
    <source>
        <dbReference type="PROSITE-ProRule" id="PRU00691"/>
    </source>
</evidence>
<evidence type="ECO:0000305" key="3"/>
<accession>Q9UW02</accession>
<sequence length="106" mass="11773">MVQVISNLDEFNKLTNSGKIIIIDFWATWCGPCRVISPIFEKFSEKYGANNIVFAKVDVDTASDISEEAKIRAMPTFQVYKDGQKIDELVGANPTALESLVQKSLA</sequence>
<proteinExistence type="evidence at protein level"/>
<name>THIO_COPCM</name>
<keyword id="KW-0020">Allergen</keyword>
<keyword id="KW-1015">Disulfide bond</keyword>
<keyword id="KW-0249">Electron transport</keyword>
<keyword id="KW-0676">Redox-active center</keyword>
<keyword id="KW-0813">Transport</keyword>
<feature type="chain" id="PRO_0000120038" description="Thioredoxin">
    <location>
        <begin position="1"/>
        <end position="106"/>
    </location>
</feature>
<feature type="domain" description="Thioredoxin" evidence="2">
    <location>
        <begin position="2"/>
        <end position="106"/>
    </location>
</feature>
<feature type="active site" description="Nucleophile" evidence="1">
    <location>
        <position position="30"/>
    </location>
</feature>
<feature type="active site" description="Nucleophile" evidence="1">
    <location>
        <position position="33"/>
    </location>
</feature>
<feature type="site" description="Deprotonates C-terminal active site Cys" evidence="1">
    <location>
        <position position="24"/>
    </location>
</feature>
<feature type="site" description="Contributes to redox potential value" evidence="1">
    <location>
        <position position="31"/>
    </location>
</feature>
<feature type="site" description="Contributes to redox potential value" evidence="1">
    <location>
        <position position="32"/>
    </location>
</feature>
<feature type="disulfide bond" description="Redox-active" evidence="2">
    <location>
        <begin position="30"/>
        <end position="33"/>
    </location>
</feature>
<comment type="function">
    <text>Participates in various redox reactions through the reversible oxidation of its active center dithiol to a disulfide and catalyzes dithiol-disulfide exchange reactions.</text>
</comment>
<comment type="allergen">
    <text>Causes an allergic reaction in human.</text>
</comment>
<comment type="similarity">
    <text evidence="3">Belongs to the thioredoxin family.</text>
</comment>
<protein>
    <recommendedName>
        <fullName>Thioredoxin</fullName>
        <shortName>Trx</shortName>
    </recommendedName>
    <allergenName>Cop c 2</allergenName>
</protein>
<reference key="1">
    <citation type="submission" date="1999-06" db="EMBL/GenBank/DDBJ databases">
        <title>Coprinus thioredoxin as inhalative allergen and cross-reactive human autoantigen.</title>
        <authorList>
            <person name="Brander K.A."/>
            <person name="Crameri R."/>
            <person name="Schuermann P."/>
            <person name="Pichler W.J."/>
            <person name="Helbling A."/>
        </authorList>
    </citation>
    <scope>NUCLEOTIDE SEQUENCE [MRNA]</scope>
</reference>